<accession>B0UHU5</accession>
<proteinExistence type="inferred from homology"/>
<comment type="function">
    <text evidence="1">DNA-dependent RNA polymerase catalyzes the transcription of DNA into RNA using the four ribonucleoside triphosphates as substrates.</text>
</comment>
<comment type="catalytic activity">
    <reaction evidence="1">
        <text>RNA(n) + a ribonucleoside 5'-triphosphate = RNA(n+1) + diphosphate</text>
        <dbReference type="Rhea" id="RHEA:21248"/>
        <dbReference type="Rhea" id="RHEA-COMP:14527"/>
        <dbReference type="Rhea" id="RHEA-COMP:17342"/>
        <dbReference type="ChEBI" id="CHEBI:33019"/>
        <dbReference type="ChEBI" id="CHEBI:61557"/>
        <dbReference type="ChEBI" id="CHEBI:140395"/>
        <dbReference type="EC" id="2.7.7.6"/>
    </reaction>
</comment>
<comment type="subunit">
    <text evidence="1">Homodimer. The RNAP catalytic core consists of 2 alpha, 1 beta, 1 beta' and 1 omega subunit. When a sigma factor is associated with the core the holoenzyme is formed, which can initiate transcription.</text>
</comment>
<comment type="domain">
    <text evidence="1">The N-terminal domain is essential for RNAP assembly and basal transcription, whereas the C-terminal domain is involved in interaction with transcriptional regulators and with upstream promoter elements.</text>
</comment>
<comment type="similarity">
    <text evidence="1">Belongs to the RNA polymerase alpha chain family.</text>
</comment>
<evidence type="ECO:0000255" key="1">
    <source>
        <dbReference type="HAMAP-Rule" id="MF_00059"/>
    </source>
</evidence>
<keyword id="KW-0240">DNA-directed RNA polymerase</keyword>
<keyword id="KW-0548">Nucleotidyltransferase</keyword>
<keyword id="KW-0804">Transcription</keyword>
<keyword id="KW-0808">Transferase</keyword>
<sequence length="339" mass="37327">MVIQKNWQELIKPNKLEVVPGHDPKRVATVVAEPLERGFGTTLGNALRRVLLSSLQGAAVTSVHIDGVLHEFSSIPGVREDVTDIVLNIKTIAIRSNSDAPKRMTLRKTGPGLVTAGDISTIGDIQILNPDLVLCTLDEGAEIRMEFTVATGKGYVPADRNRPEDAPIGLIPVDALFSPVTKVSYRIENTREGQDLDKDKLTMTVETNGAVSPEDALAYAARIIQDQLQIFVNFEEPRKEEAAPLAPQLPFNPALLKKVDELELSVRSANCLKNDNIVYIGDLIQKTEAEMLRTPNFGRKSLNEIKEVLAAMGLHLGMDVPGWPPENIEDLAKRFEEHY</sequence>
<dbReference type="EC" id="2.7.7.6" evidence="1"/>
<dbReference type="EMBL" id="CP000943">
    <property type="protein sequence ID" value="ACA14900.1"/>
    <property type="molecule type" value="Genomic_DNA"/>
</dbReference>
<dbReference type="RefSeq" id="WP_012330318.1">
    <property type="nucleotide sequence ID" value="NC_010511.1"/>
</dbReference>
<dbReference type="SMR" id="B0UHU5"/>
<dbReference type="STRING" id="426117.M446_0329"/>
<dbReference type="KEGG" id="met:M446_0329"/>
<dbReference type="eggNOG" id="COG0202">
    <property type="taxonomic scope" value="Bacteria"/>
</dbReference>
<dbReference type="HOGENOM" id="CLU_053084_0_0_5"/>
<dbReference type="GO" id="GO:0005737">
    <property type="term" value="C:cytoplasm"/>
    <property type="evidence" value="ECO:0007669"/>
    <property type="project" value="UniProtKB-ARBA"/>
</dbReference>
<dbReference type="GO" id="GO:0000428">
    <property type="term" value="C:DNA-directed RNA polymerase complex"/>
    <property type="evidence" value="ECO:0007669"/>
    <property type="project" value="UniProtKB-KW"/>
</dbReference>
<dbReference type="GO" id="GO:0003677">
    <property type="term" value="F:DNA binding"/>
    <property type="evidence" value="ECO:0007669"/>
    <property type="project" value="UniProtKB-UniRule"/>
</dbReference>
<dbReference type="GO" id="GO:0003899">
    <property type="term" value="F:DNA-directed RNA polymerase activity"/>
    <property type="evidence" value="ECO:0007669"/>
    <property type="project" value="UniProtKB-UniRule"/>
</dbReference>
<dbReference type="GO" id="GO:0046983">
    <property type="term" value="F:protein dimerization activity"/>
    <property type="evidence" value="ECO:0007669"/>
    <property type="project" value="InterPro"/>
</dbReference>
<dbReference type="GO" id="GO:0006351">
    <property type="term" value="P:DNA-templated transcription"/>
    <property type="evidence" value="ECO:0007669"/>
    <property type="project" value="UniProtKB-UniRule"/>
</dbReference>
<dbReference type="CDD" id="cd06928">
    <property type="entry name" value="RNAP_alpha_NTD"/>
    <property type="match status" value="1"/>
</dbReference>
<dbReference type="FunFam" id="1.10.150.20:FF:000001">
    <property type="entry name" value="DNA-directed RNA polymerase subunit alpha"/>
    <property type="match status" value="1"/>
</dbReference>
<dbReference type="FunFam" id="2.170.120.12:FF:000001">
    <property type="entry name" value="DNA-directed RNA polymerase subunit alpha"/>
    <property type="match status" value="1"/>
</dbReference>
<dbReference type="Gene3D" id="1.10.150.20">
    <property type="entry name" value="5' to 3' exonuclease, C-terminal subdomain"/>
    <property type="match status" value="1"/>
</dbReference>
<dbReference type="Gene3D" id="2.170.120.12">
    <property type="entry name" value="DNA-directed RNA polymerase, insert domain"/>
    <property type="match status" value="1"/>
</dbReference>
<dbReference type="Gene3D" id="3.30.1360.10">
    <property type="entry name" value="RNA polymerase, RBP11-like subunit"/>
    <property type="match status" value="1"/>
</dbReference>
<dbReference type="HAMAP" id="MF_00059">
    <property type="entry name" value="RNApol_bact_RpoA"/>
    <property type="match status" value="1"/>
</dbReference>
<dbReference type="InterPro" id="IPR011262">
    <property type="entry name" value="DNA-dir_RNA_pol_insert"/>
</dbReference>
<dbReference type="InterPro" id="IPR011263">
    <property type="entry name" value="DNA-dir_RNA_pol_RpoA/D/Rpb3"/>
</dbReference>
<dbReference type="InterPro" id="IPR011773">
    <property type="entry name" value="DNA-dir_RpoA"/>
</dbReference>
<dbReference type="InterPro" id="IPR036603">
    <property type="entry name" value="RBP11-like"/>
</dbReference>
<dbReference type="InterPro" id="IPR011260">
    <property type="entry name" value="RNAP_asu_C"/>
</dbReference>
<dbReference type="InterPro" id="IPR036643">
    <property type="entry name" value="RNApol_insert_sf"/>
</dbReference>
<dbReference type="NCBIfam" id="NF003513">
    <property type="entry name" value="PRK05182.1-2"/>
    <property type="match status" value="1"/>
</dbReference>
<dbReference type="NCBIfam" id="NF003519">
    <property type="entry name" value="PRK05182.2-5"/>
    <property type="match status" value="1"/>
</dbReference>
<dbReference type="NCBIfam" id="TIGR02027">
    <property type="entry name" value="rpoA"/>
    <property type="match status" value="1"/>
</dbReference>
<dbReference type="Pfam" id="PF01000">
    <property type="entry name" value="RNA_pol_A_bac"/>
    <property type="match status" value="1"/>
</dbReference>
<dbReference type="Pfam" id="PF03118">
    <property type="entry name" value="RNA_pol_A_CTD"/>
    <property type="match status" value="1"/>
</dbReference>
<dbReference type="Pfam" id="PF01193">
    <property type="entry name" value="RNA_pol_L"/>
    <property type="match status" value="1"/>
</dbReference>
<dbReference type="SMART" id="SM00662">
    <property type="entry name" value="RPOLD"/>
    <property type="match status" value="1"/>
</dbReference>
<dbReference type="SUPFAM" id="SSF47789">
    <property type="entry name" value="C-terminal domain of RNA polymerase alpha subunit"/>
    <property type="match status" value="1"/>
</dbReference>
<dbReference type="SUPFAM" id="SSF56553">
    <property type="entry name" value="Insert subdomain of RNA polymerase alpha subunit"/>
    <property type="match status" value="1"/>
</dbReference>
<dbReference type="SUPFAM" id="SSF55257">
    <property type="entry name" value="RBP11-like subunits of RNA polymerase"/>
    <property type="match status" value="1"/>
</dbReference>
<reference key="1">
    <citation type="submission" date="2008-02" db="EMBL/GenBank/DDBJ databases">
        <title>Complete sequence of chromosome of Methylobacterium sp. 4-46.</title>
        <authorList>
            <consortium name="US DOE Joint Genome Institute"/>
            <person name="Copeland A."/>
            <person name="Lucas S."/>
            <person name="Lapidus A."/>
            <person name="Glavina del Rio T."/>
            <person name="Dalin E."/>
            <person name="Tice H."/>
            <person name="Bruce D."/>
            <person name="Goodwin L."/>
            <person name="Pitluck S."/>
            <person name="Chertkov O."/>
            <person name="Brettin T."/>
            <person name="Detter J.C."/>
            <person name="Han C."/>
            <person name="Kuske C.R."/>
            <person name="Schmutz J."/>
            <person name="Larimer F."/>
            <person name="Land M."/>
            <person name="Hauser L."/>
            <person name="Kyrpides N."/>
            <person name="Ivanova N."/>
            <person name="Marx C.J."/>
            <person name="Richardson P."/>
        </authorList>
    </citation>
    <scope>NUCLEOTIDE SEQUENCE [LARGE SCALE GENOMIC DNA]</scope>
    <source>
        <strain>4-46</strain>
    </source>
</reference>
<feature type="chain" id="PRO_1000196644" description="DNA-directed RNA polymerase subunit alpha">
    <location>
        <begin position="1"/>
        <end position="339"/>
    </location>
</feature>
<feature type="region of interest" description="Alpha N-terminal domain (alpha-NTD)" evidence="1">
    <location>
        <begin position="1"/>
        <end position="235"/>
    </location>
</feature>
<feature type="region of interest" description="Alpha C-terminal domain (alpha-CTD)" evidence="1">
    <location>
        <begin position="251"/>
        <end position="339"/>
    </location>
</feature>
<organism>
    <name type="scientific">Methylobacterium sp. (strain 4-46)</name>
    <dbReference type="NCBI Taxonomy" id="426117"/>
    <lineage>
        <taxon>Bacteria</taxon>
        <taxon>Pseudomonadati</taxon>
        <taxon>Pseudomonadota</taxon>
        <taxon>Alphaproteobacteria</taxon>
        <taxon>Hyphomicrobiales</taxon>
        <taxon>Methylobacteriaceae</taxon>
        <taxon>Methylobacterium</taxon>
    </lineage>
</organism>
<protein>
    <recommendedName>
        <fullName evidence="1">DNA-directed RNA polymerase subunit alpha</fullName>
        <shortName evidence="1">RNAP subunit alpha</shortName>
        <ecNumber evidence="1">2.7.7.6</ecNumber>
    </recommendedName>
    <alternativeName>
        <fullName evidence="1">RNA polymerase subunit alpha</fullName>
    </alternativeName>
    <alternativeName>
        <fullName evidence="1">Transcriptase subunit alpha</fullName>
    </alternativeName>
</protein>
<name>RPOA_METS4</name>
<gene>
    <name evidence="1" type="primary">rpoA</name>
    <name type="ordered locus">M446_0329</name>
</gene>